<reference key="1">
    <citation type="journal article" date="2000" name="Nucleic Acids Res.">
        <title>Complete genome sequence of the alkaliphilic bacterium Bacillus halodurans and genomic sequence comparison with Bacillus subtilis.</title>
        <authorList>
            <person name="Takami H."/>
            <person name="Nakasone K."/>
            <person name="Takaki Y."/>
            <person name="Maeno G."/>
            <person name="Sasaki R."/>
            <person name="Masui N."/>
            <person name="Fuji F."/>
            <person name="Hirama C."/>
            <person name="Nakamura Y."/>
            <person name="Ogasawara N."/>
            <person name="Kuhara S."/>
            <person name="Horikoshi K."/>
        </authorList>
    </citation>
    <scope>NUCLEOTIDE SEQUENCE [LARGE SCALE GENOMIC DNA]</scope>
    <source>
        <strain>ATCC BAA-125 / DSM 18197 / FERM 7344 / JCM 9153 / C-125</strain>
    </source>
</reference>
<comment type="similarity">
    <text evidence="2">Belongs to the UPF0157 (GrpB) family.</text>
</comment>
<name>Y1888_HALH5</name>
<sequence>MPPMKDSSNSTPRTDEELQEVTVGELKPHNASITLLEYDPRWPKLFDREAKRIRSVLGNKALQVEHVGSTSVPGLCAKPIIDILLVVTDSADETTYVPDLEKVGYTLRIREPDWFEHRVFKGPDTDINLHVFSKGTSEIDRMLRFRDWLRANNSDRDNYARVKRKLAQHEWRQVQHYADAKSSIVQEIMKRANAT</sequence>
<protein>
    <recommendedName>
        <fullName>UPF0157 protein BH1888</fullName>
    </recommendedName>
</protein>
<keyword id="KW-1185">Reference proteome</keyword>
<gene>
    <name type="ordered locus">BH1888</name>
</gene>
<dbReference type="EMBL" id="BA000004">
    <property type="protein sequence ID" value="BAB05607.1"/>
    <property type="molecule type" value="Genomic_DNA"/>
</dbReference>
<dbReference type="PIR" id="H83885">
    <property type="entry name" value="H83885"/>
</dbReference>
<dbReference type="RefSeq" id="WP_010898049.1">
    <property type="nucleotide sequence ID" value="NC_002570.2"/>
</dbReference>
<dbReference type="SMR" id="Q9KBN7"/>
<dbReference type="STRING" id="272558.gene:10727786"/>
<dbReference type="KEGG" id="bha:BH1888"/>
<dbReference type="eggNOG" id="COG2320">
    <property type="taxonomic scope" value="Bacteria"/>
</dbReference>
<dbReference type="HOGENOM" id="CLU_086407_1_1_9"/>
<dbReference type="Proteomes" id="UP000001258">
    <property type="component" value="Chromosome"/>
</dbReference>
<dbReference type="Gene3D" id="3.30.460.10">
    <property type="entry name" value="Beta Polymerase, domain 2"/>
    <property type="match status" value="1"/>
</dbReference>
<dbReference type="InterPro" id="IPR007344">
    <property type="entry name" value="GrpB/CoaE"/>
</dbReference>
<dbReference type="InterPro" id="IPR043519">
    <property type="entry name" value="NT_sf"/>
</dbReference>
<dbReference type="PANTHER" id="PTHR34822">
    <property type="entry name" value="GRPB DOMAIN PROTEIN (AFU_ORTHOLOGUE AFUA_1G01530)"/>
    <property type="match status" value="1"/>
</dbReference>
<dbReference type="PANTHER" id="PTHR34822:SF1">
    <property type="entry name" value="GRPB FAMILY PROTEIN"/>
    <property type="match status" value="1"/>
</dbReference>
<dbReference type="Pfam" id="PF04229">
    <property type="entry name" value="GrpB"/>
    <property type="match status" value="1"/>
</dbReference>
<dbReference type="SUPFAM" id="SSF81301">
    <property type="entry name" value="Nucleotidyltransferase"/>
    <property type="match status" value="1"/>
</dbReference>
<evidence type="ECO:0000256" key="1">
    <source>
        <dbReference type="SAM" id="MobiDB-lite"/>
    </source>
</evidence>
<evidence type="ECO:0000305" key="2"/>
<organism>
    <name type="scientific">Halalkalibacterium halodurans (strain ATCC BAA-125 / DSM 18197 / FERM 7344 / JCM 9153 / C-125)</name>
    <name type="common">Bacillus halodurans</name>
    <dbReference type="NCBI Taxonomy" id="272558"/>
    <lineage>
        <taxon>Bacteria</taxon>
        <taxon>Bacillati</taxon>
        <taxon>Bacillota</taxon>
        <taxon>Bacilli</taxon>
        <taxon>Bacillales</taxon>
        <taxon>Bacillaceae</taxon>
        <taxon>Halalkalibacterium (ex Joshi et al. 2022)</taxon>
    </lineage>
</organism>
<accession>Q9KBN7</accession>
<feature type="chain" id="PRO_0000216126" description="UPF0157 protein BH1888">
    <location>
        <begin position="1"/>
        <end position="195"/>
    </location>
</feature>
<feature type="region of interest" description="Disordered" evidence="1">
    <location>
        <begin position="1"/>
        <end position="21"/>
    </location>
</feature>
<feature type="compositionally biased region" description="Polar residues" evidence="1">
    <location>
        <begin position="1"/>
        <end position="12"/>
    </location>
</feature>
<proteinExistence type="inferred from homology"/>